<comment type="similarity">
    <text evidence="1">Belongs to the universal ribosomal protein uL29 family.</text>
</comment>
<keyword id="KW-0687">Ribonucleoprotein</keyword>
<keyword id="KW-0689">Ribosomal protein</keyword>
<protein>
    <recommendedName>
        <fullName evidence="1">Large ribosomal subunit protein uL29</fullName>
    </recommendedName>
    <alternativeName>
        <fullName evidence="2">50S ribosomal protein L29</fullName>
    </alternativeName>
</protein>
<accession>B9K894</accession>
<evidence type="ECO:0000255" key="1">
    <source>
        <dbReference type="HAMAP-Rule" id="MF_00374"/>
    </source>
</evidence>
<evidence type="ECO:0000305" key="2"/>
<name>RL29_THENN</name>
<reference key="1">
    <citation type="submission" date="2007-11" db="EMBL/GenBank/DDBJ databases">
        <title>The genome sequence of the hyperthermophilic bacterium Thermotoga neapolitana.</title>
        <authorList>
            <person name="Lim S.K."/>
            <person name="Kim J.S."/>
            <person name="Cha S.H."/>
            <person name="Park B.C."/>
            <person name="Lee D.S."/>
            <person name="Tae H.S."/>
            <person name="Kim S.-J."/>
            <person name="Kim J.J."/>
            <person name="Park K.J."/>
            <person name="Lee S.Y."/>
        </authorList>
    </citation>
    <scope>NUCLEOTIDE SEQUENCE [LARGE SCALE GENOMIC DNA]</scope>
    <source>
        <strain>ATCC 49049 / DSM 4359 / NBRC 107923 / NS-E</strain>
    </source>
</reference>
<gene>
    <name evidence="1" type="primary">rpmC</name>
    <name type="ordered locus">CTN_1001</name>
</gene>
<feature type="chain" id="PRO_1000194040" description="Large ribosomal subunit protein uL29">
    <location>
        <begin position="1"/>
        <end position="66"/>
    </location>
</feature>
<dbReference type="EMBL" id="CP000916">
    <property type="protein sequence ID" value="ACM23177.1"/>
    <property type="molecule type" value="Genomic_DNA"/>
</dbReference>
<dbReference type="RefSeq" id="WP_015919494.1">
    <property type="nucleotide sequence ID" value="NC_011978.1"/>
</dbReference>
<dbReference type="BMRB" id="B9K894"/>
<dbReference type="SMR" id="B9K894"/>
<dbReference type="STRING" id="309803.CTN_1001"/>
<dbReference type="KEGG" id="tna:CTN_1001"/>
<dbReference type="eggNOG" id="COG0255">
    <property type="taxonomic scope" value="Bacteria"/>
</dbReference>
<dbReference type="HOGENOM" id="CLU_158491_5_2_0"/>
<dbReference type="Proteomes" id="UP000000445">
    <property type="component" value="Chromosome"/>
</dbReference>
<dbReference type="GO" id="GO:0022625">
    <property type="term" value="C:cytosolic large ribosomal subunit"/>
    <property type="evidence" value="ECO:0007669"/>
    <property type="project" value="TreeGrafter"/>
</dbReference>
<dbReference type="GO" id="GO:0003735">
    <property type="term" value="F:structural constituent of ribosome"/>
    <property type="evidence" value="ECO:0007669"/>
    <property type="project" value="InterPro"/>
</dbReference>
<dbReference type="GO" id="GO:0006412">
    <property type="term" value="P:translation"/>
    <property type="evidence" value="ECO:0007669"/>
    <property type="project" value="UniProtKB-UniRule"/>
</dbReference>
<dbReference type="CDD" id="cd00427">
    <property type="entry name" value="Ribosomal_L29_HIP"/>
    <property type="match status" value="1"/>
</dbReference>
<dbReference type="FunFam" id="1.10.287.310:FF:000001">
    <property type="entry name" value="50S ribosomal protein L29"/>
    <property type="match status" value="1"/>
</dbReference>
<dbReference type="Gene3D" id="1.10.287.310">
    <property type="match status" value="1"/>
</dbReference>
<dbReference type="HAMAP" id="MF_00374">
    <property type="entry name" value="Ribosomal_uL29"/>
    <property type="match status" value="1"/>
</dbReference>
<dbReference type="InterPro" id="IPR050063">
    <property type="entry name" value="Ribosomal_protein_uL29"/>
</dbReference>
<dbReference type="InterPro" id="IPR001854">
    <property type="entry name" value="Ribosomal_uL29"/>
</dbReference>
<dbReference type="InterPro" id="IPR018254">
    <property type="entry name" value="Ribosomal_uL29_CS"/>
</dbReference>
<dbReference type="InterPro" id="IPR036049">
    <property type="entry name" value="Ribosomal_uL29_sf"/>
</dbReference>
<dbReference type="NCBIfam" id="TIGR00012">
    <property type="entry name" value="L29"/>
    <property type="match status" value="1"/>
</dbReference>
<dbReference type="PANTHER" id="PTHR10916">
    <property type="entry name" value="60S RIBOSOMAL PROTEIN L35/50S RIBOSOMAL PROTEIN L29"/>
    <property type="match status" value="1"/>
</dbReference>
<dbReference type="PANTHER" id="PTHR10916:SF0">
    <property type="entry name" value="LARGE RIBOSOMAL SUBUNIT PROTEIN UL29C"/>
    <property type="match status" value="1"/>
</dbReference>
<dbReference type="Pfam" id="PF00831">
    <property type="entry name" value="Ribosomal_L29"/>
    <property type="match status" value="1"/>
</dbReference>
<dbReference type="SUPFAM" id="SSF46561">
    <property type="entry name" value="Ribosomal protein L29 (L29p)"/>
    <property type="match status" value="1"/>
</dbReference>
<dbReference type="PROSITE" id="PS00579">
    <property type="entry name" value="RIBOSOMAL_L29"/>
    <property type="match status" value="1"/>
</dbReference>
<organism>
    <name type="scientific">Thermotoga neapolitana (strain ATCC 49049 / DSM 4359 / NBRC 107923 / NS-E)</name>
    <dbReference type="NCBI Taxonomy" id="309803"/>
    <lineage>
        <taxon>Bacteria</taxon>
        <taxon>Thermotogati</taxon>
        <taxon>Thermotogota</taxon>
        <taxon>Thermotogae</taxon>
        <taxon>Thermotogales</taxon>
        <taxon>Thermotogaceae</taxon>
        <taxon>Thermotoga</taxon>
    </lineage>
</organism>
<sequence length="66" mass="8000">MKASELRNYTDEELRNLLEEKKRQLMELRFQLAMGQLKNTSLIKLTKRDIARIKTILRERELGIRR</sequence>
<proteinExistence type="inferred from homology"/>